<sequence>MKKRALVSVSDKTGVVEFVKGLLEQGIEVISTGGTKKLLEENGLQVIGISEVTGFPEIMDGRVKTLHPNIHGGLLAVRDNETHVAQMNELGMEPIDFVIVNLYPFKETIAKPDVTFADAIENIDIGGPTMIRSAAKNHKFVSVIVDPVDYDVVLAELKENGEVKEETKRKLAAKVFRHTAAYDALISNYLTEQMGEENPETLTVTFEKKQDLRYGENPHQKATFYKAPFAVTSSVAYAEQLHGKELSYNNINDADAALSIVKEFTEPAVVAVKHMNPCGVGVGTDIHEAYTRAYEADPVSIFGGIIAANREIDKATAEKLHEIFLEIIIAPSFSKEALEVLQSKKNLRLLTVNIEKATSASKKLTSVQGGLLVQEEDTLSLDESTISIPTKREPSEQEWKDLKLAWKVVKHVKSNAIVLAKDDMTIGVGAGQMNRVGSAKIAITQAGEKAQGSALASDAFFPMPDTVEEAAKAGITAIIQPGGSIRDEDSIKVADTYGIAMVFTGVRHFKH</sequence>
<gene>
    <name evidence="1" type="primary">purH</name>
    <name type="ordered locus">BALH_0292</name>
</gene>
<reference key="1">
    <citation type="journal article" date="2007" name="J. Bacteriol.">
        <title>The complete genome sequence of Bacillus thuringiensis Al Hakam.</title>
        <authorList>
            <person name="Challacombe J.F."/>
            <person name="Altherr M.R."/>
            <person name="Xie G."/>
            <person name="Bhotika S.S."/>
            <person name="Brown N."/>
            <person name="Bruce D."/>
            <person name="Campbell C.S."/>
            <person name="Campbell M.L."/>
            <person name="Chen J."/>
            <person name="Chertkov O."/>
            <person name="Cleland C."/>
            <person name="Dimitrijevic M."/>
            <person name="Doggett N.A."/>
            <person name="Fawcett J.J."/>
            <person name="Glavina T."/>
            <person name="Goodwin L.A."/>
            <person name="Green L.D."/>
            <person name="Han C.S."/>
            <person name="Hill K.K."/>
            <person name="Hitchcock P."/>
            <person name="Jackson P.J."/>
            <person name="Keim P."/>
            <person name="Kewalramani A.R."/>
            <person name="Longmire J."/>
            <person name="Lucas S."/>
            <person name="Malfatti S."/>
            <person name="Martinez D."/>
            <person name="McMurry K."/>
            <person name="Meincke L.J."/>
            <person name="Misra M."/>
            <person name="Moseman B.L."/>
            <person name="Mundt M."/>
            <person name="Munk A.C."/>
            <person name="Okinaka R.T."/>
            <person name="Parson-Quintana B."/>
            <person name="Reilly L.P."/>
            <person name="Richardson P."/>
            <person name="Robinson D.L."/>
            <person name="Saunders E."/>
            <person name="Tapia R."/>
            <person name="Tesmer J.G."/>
            <person name="Thayer N."/>
            <person name="Thompson L.S."/>
            <person name="Tice H."/>
            <person name="Ticknor L.O."/>
            <person name="Wills P.L."/>
            <person name="Gilna P."/>
            <person name="Brettin T.S."/>
        </authorList>
    </citation>
    <scope>NUCLEOTIDE SEQUENCE [LARGE SCALE GENOMIC DNA]</scope>
    <source>
        <strain>Al Hakam</strain>
    </source>
</reference>
<accession>A0R900</accession>
<protein>
    <recommendedName>
        <fullName evidence="1">Bifunctional purine biosynthesis protein PurH</fullName>
    </recommendedName>
    <domain>
        <recommendedName>
            <fullName evidence="1">Phosphoribosylaminoimidazolecarboxamide formyltransferase</fullName>
            <ecNumber evidence="1">2.1.2.3</ecNumber>
        </recommendedName>
        <alternativeName>
            <fullName evidence="1">AICAR transformylase</fullName>
        </alternativeName>
    </domain>
    <domain>
        <recommendedName>
            <fullName evidence="1">IMP cyclohydrolase</fullName>
            <ecNumber evidence="1">3.5.4.10</ecNumber>
        </recommendedName>
        <alternativeName>
            <fullName evidence="1">ATIC</fullName>
        </alternativeName>
        <alternativeName>
            <fullName evidence="1">IMP synthase</fullName>
        </alternativeName>
        <alternativeName>
            <fullName evidence="1">Inosinicase</fullName>
        </alternativeName>
    </domain>
</protein>
<dbReference type="EC" id="2.1.2.3" evidence="1"/>
<dbReference type="EC" id="3.5.4.10" evidence="1"/>
<dbReference type="EMBL" id="CP000485">
    <property type="protein sequence ID" value="ABK83693.1"/>
    <property type="molecule type" value="Genomic_DNA"/>
</dbReference>
<dbReference type="RefSeq" id="WP_000745418.1">
    <property type="nucleotide sequence ID" value="NC_008600.1"/>
</dbReference>
<dbReference type="SMR" id="A0R900"/>
<dbReference type="KEGG" id="btl:BALH_0292"/>
<dbReference type="HOGENOM" id="CLU_016316_5_2_9"/>
<dbReference type="UniPathway" id="UPA00074">
    <property type="reaction ID" value="UER00133"/>
</dbReference>
<dbReference type="UniPathway" id="UPA00074">
    <property type="reaction ID" value="UER00135"/>
</dbReference>
<dbReference type="GO" id="GO:0005829">
    <property type="term" value="C:cytosol"/>
    <property type="evidence" value="ECO:0007669"/>
    <property type="project" value="TreeGrafter"/>
</dbReference>
<dbReference type="GO" id="GO:0003937">
    <property type="term" value="F:IMP cyclohydrolase activity"/>
    <property type="evidence" value="ECO:0007669"/>
    <property type="project" value="UniProtKB-UniRule"/>
</dbReference>
<dbReference type="GO" id="GO:0004643">
    <property type="term" value="F:phosphoribosylaminoimidazolecarboxamide formyltransferase activity"/>
    <property type="evidence" value="ECO:0007669"/>
    <property type="project" value="UniProtKB-UniRule"/>
</dbReference>
<dbReference type="GO" id="GO:0006189">
    <property type="term" value="P:'de novo' IMP biosynthetic process"/>
    <property type="evidence" value="ECO:0007669"/>
    <property type="project" value="UniProtKB-UniRule"/>
</dbReference>
<dbReference type="CDD" id="cd01421">
    <property type="entry name" value="IMPCH"/>
    <property type="match status" value="1"/>
</dbReference>
<dbReference type="FunFam" id="3.40.140.20:FF:000001">
    <property type="entry name" value="Bifunctional purine biosynthesis protein PurH"/>
    <property type="match status" value="1"/>
</dbReference>
<dbReference type="FunFam" id="3.40.140.20:FF:000002">
    <property type="entry name" value="Bifunctional purine biosynthesis protein PurH"/>
    <property type="match status" value="1"/>
</dbReference>
<dbReference type="FunFam" id="3.40.50.1380:FF:000001">
    <property type="entry name" value="Bifunctional purine biosynthesis protein PurH"/>
    <property type="match status" value="1"/>
</dbReference>
<dbReference type="Gene3D" id="3.40.140.20">
    <property type="match status" value="2"/>
</dbReference>
<dbReference type="Gene3D" id="3.40.50.1380">
    <property type="entry name" value="Methylglyoxal synthase-like domain"/>
    <property type="match status" value="1"/>
</dbReference>
<dbReference type="HAMAP" id="MF_00139">
    <property type="entry name" value="PurH"/>
    <property type="match status" value="1"/>
</dbReference>
<dbReference type="InterPro" id="IPR024051">
    <property type="entry name" value="AICAR_Tfase_dup_dom_sf"/>
</dbReference>
<dbReference type="InterPro" id="IPR016193">
    <property type="entry name" value="Cytidine_deaminase-like"/>
</dbReference>
<dbReference type="InterPro" id="IPR011607">
    <property type="entry name" value="MGS-like_dom"/>
</dbReference>
<dbReference type="InterPro" id="IPR036914">
    <property type="entry name" value="MGS-like_dom_sf"/>
</dbReference>
<dbReference type="InterPro" id="IPR002695">
    <property type="entry name" value="PurH-like"/>
</dbReference>
<dbReference type="NCBIfam" id="NF002049">
    <property type="entry name" value="PRK00881.1"/>
    <property type="match status" value="1"/>
</dbReference>
<dbReference type="NCBIfam" id="TIGR00355">
    <property type="entry name" value="purH"/>
    <property type="match status" value="1"/>
</dbReference>
<dbReference type="PANTHER" id="PTHR11692:SF0">
    <property type="entry name" value="BIFUNCTIONAL PURINE BIOSYNTHESIS PROTEIN ATIC"/>
    <property type="match status" value="1"/>
</dbReference>
<dbReference type="PANTHER" id="PTHR11692">
    <property type="entry name" value="BIFUNCTIONAL PURINE BIOSYNTHESIS PROTEIN PURH"/>
    <property type="match status" value="1"/>
</dbReference>
<dbReference type="Pfam" id="PF01808">
    <property type="entry name" value="AICARFT_IMPCHas"/>
    <property type="match status" value="1"/>
</dbReference>
<dbReference type="Pfam" id="PF02142">
    <property type="entry name" value="MGS"/>
    <property type="match status" value="1"/>
</dbReference>
<dbReference type="PIRSF" id="PIRSF000414">
    <property type="entry name" value="AICARFT_IMPCHas"/>
    <property type="match status" value="1"/>
</dbReference>
<dbReference type="SMART" id="SM00798">
    <property type="entry name" value="AICARFT_IMPCHas"/>
    <property type="match status" value="1"/>
</dbReference>
<dbReference type="SMART" id="SM00851">
    <property type="entry name" value="MGS"/>
    <property type="match status" value="1"/>
</dbReference>
<dbReference type="SUPFAM" id="SSF53927">
    <property type="entry name" value="Cytidine deaminase-like"/>
    <property type="match status" value="1"/>
</dbReference>
<dbReference type="SUPFAM" id="SSF52335">
    <property type="entry name" value="Methylglyoxal synthase-like"/>
    <property type="match status" value="1"/>
</dbReference>
<dbReference type="PROSITE" id="PS51855">
    <property type="entry name" value="MGS"/>
    <property type="match status" value="1"/>
</dbReference>
<name>PUR9_BACAH</name>
<organism>
    <name type="scientific">Bacillus thuringiensis (strain Al Hakam)</name>
    <dbReference type="NCBI Taxonomy" id="412694"/>
    <lineage>
        <taxon>Bacteria</taxon>
        <taxon>Bacillati</taxon>
        <taxon>Bacillota</taxon>
        <taxon>Bacilli</taxon>
        <taxon>Bacillales</taxon>
        <taxon>Bacillaceae</taxon>
        <taxon>Bacillus</taxon>
        <taxon>Bacillus cereus group</taxon>
    </lineage>
</organism>
<feature type="chain" id="PRO_1000018837" description="Bifunctional purine biosynthesis protein PurH">
    <location>
        <begin position="1"/>
        <end position="511"/>
    </location>
</feature>
<feature type="domain" description="MGS-like" evidence="2">
    <location>
        <begin position="1"/>
        <end position="145"/>
    </location>
</feature>
<comment type="catalytic activity">
    <reaction evidence="1">
        <text>(6R)-10-formyltetrahydrofolate + 5-amino-1-(5-phospho-beta-D-ribosyl)imidazole-4-carboxamide = 5-formamido-1-(5-phospho-D-ribosyl)imidazole-4-carboxamide + (6S)-5,6,7,8-tetrahydrofolate</text>
        <dbReference type="Rhea" id="RHEA:22192"/>
        <dbReference type="ChEBI" id="CHEBI:57453"/>
        <dbReference type="ChEBI" id="CHEBI:58467"/>
        <dbReference type="ChEBI" id="CHEBI:58475"/>
        <dbReference type="ChEBI" id="CHEBI:195366"/>
        <dbReference type="EC" id="2.1.2.3"/>
    </reaction>
</comment>
<comment type="catalytic activity">
    <reaction evidence="1">
        <text>IMP + H2O = 5-formamido-1-(5-phospho-D-ribosyl)imidazole-4-carboxamide</text>
        <dbReference type="Rhea" id="RHEA:18445"/>
        <dbReference type="ChEBI" id="CHEBI:15377"/>
        <dbReference type="ChEBI" id="CHEBI:58053"/>
        <dbReference type="ChEBI" id="CHEBI:58467"/>
        <dbReference type="EC" id="3.5.4.10"/>
    </reaction>
</comment>
<comment type="pathway">
    <text evidence="1">Purine metabolism; IMP biosynthesis via de novo pathway; 5-formamido-1-(5-phospho-D-ribosyl)imidazole-4-carboxamide from 5-amino-1-(5-phospho-D-ribosyl)imidazole-4-carboxamide (10-formyl THF route): step 1/1.</text>
</comment>
<comment type="pathway">
    <text evidence="1">Purine metabolism; IMP biosynthesis via de novo pathway; IMP from 5-formamido-1-(5-phospho-D-ribosyl)imidazole-4-carboxamide: step 1/1.</text>
</comment>
<comment type="domain">
    <text evidence="1">The IMP cyclohydrolase activity resides in the N-terminal region.</text>
</comment>
<comment type="similarity">
    <text evidence="1">Belongs to the PurH family.</text>
</comment>
<proteinExistence type="inferred from homology"/>
<evidence type="ECO:0000255" key="1">
    <source>
        <dbReference type="HAMAP-Rule" id="MF_00139"/>
    </source>
</evidence>
<evidence type="ECO:0000255" key="2">
    <source>
        <dbReference type="PROSITE-ProRule" id="PRU01202"/>
    </source>
</evidence>
<keyword id="KW-0378">Hydrolase</keyword>
<keyword id="KW-0511">Multifunctional enzyme</keyword>
<keyword id="KW-0658">Purine biosynthesis</keyword>
<keyword id="KW-0808">Transferase</keyword>